<feature type="chain" id="PRO_0000167954" description="Small ribosomal subunit protein bS20">
    <location>
        <begin position="1"/>
        <end position="90"/>
    </location>
</feature>
<feature type="region of interest" description="Disordered" evidence="2">
    <location>
        <begin position="1"/>
        <end position="27"/>
    </location>
</feature>
<protein>
    <recommendedName>
        <fullName evidence="1">Small ribosomal subunit protein bS20</fullName>
    </recommendedName>
    <alternativeName>
        <fullName evidence="3">30S ribosomal protein S20</fullName>
    </alternativeName>
</protein>
<sequence>MANSAQAKKRARQNEKRELHNASQRSAVRTAVKKILKSLQANDSSAAQSAYQHAVQILDKAAGRRIIHPNKAARLKSRLSQKIKNLSSSQ</sequence>
<gene>
    <name evidence="1" type="primary">rpsT</name>
    <name type="ordered locus">CBU_0389</name>
</gene>
<proteinExistence type="inferred from homology"/>
<accession>Q83ED6</accession>
<comment type="function">
    <text evidence="1">Binds directly to 16S ribosomal RNA.</text>
</comment>
<comment type="similarity">
    <text evidence="1">Belongs to the bacterial ribosomal protein bS20 family.</text>
</comment>
<reference key="1">
    <citation type="journal article" date="2003" name="Proc. Natl. Acad. Sci. U.S.A.">
        <title>Complete genome sequence of the Q-fever pathogen, Coxiella burnetii.</title>
        <authorList>
            <person name="Seshadri R."/>
            <person name="Paulsen I.T."/>
            <person name="Eisen J.A."/>
            <person name="Read T.D."/>
            <person name="Nelson K.E."/>
            <person name="Nelson W.C."/>
            <person name="Ward N.L."/>
            <person name="Tettelin H."/>
            <person name="Davidsen T.M."/>
            <person name="Beanan M.J."/>
            <person name="DeBoy R.T."/>
            <person name="Daugherty S.C."/>
            <person name="Brinkac L.M."/>
            <person name="Madupu R."/>
            <person name="Dodson R.J."/>
            <person name="Khouri H.M."/>
            <person name="Lee K.H."/>
            <person name="Carty H.A."/>
            <person name="Scanlan D."/>
            <person name="Heinzen R.A."/>
            <person name="Thompson H.A."/>
            <person name="Samuel J.E."/>
            <person name="Fraser C.M."/>
            <person name="Heidelberg J.F."/>
        </authorList>
    </citation>
    <scope>NUCLEOTIDE SEQUENCE [LARGE SCALE GENOMIC DNA]</scope>
    <source>
        <strain>RSA 493 / Nine Mile phase I</strain>
    </source>
</reference>
<name>RS20_COXBU</name>
<evidence type="ECO:0000255" key="1">
    <source>
        <dbReference type="HAMAP-Rule" id="MF_00500"/>
    </source>
</evidence>
<evidence type="ECO:0000256" key="2">
    <source>
        <dbReference type="SAM" id="MobiDB-lite"/>
    </source>
</evidence>
<evidence type="ECO:0000305" key="3"/>
<organism>
    <name type="scientific">Coxiella burnetii (strain RSA 493 / Nine Mile phase I)</name>
    <dbReference type="NCBI Taxonomy" id="227377"/>
    <lineage>
        <taxon>Bacteria</taxon>
        <taxon>Pseudomonadati</taxon>
        <taxon>Pseudomonadota</taxon>
        <taxon>Gammaproteobacteria</taxon>
        <taxon>Legionellales</taxon>
        <taxon>Coxiellaceae</taxon>
        <taxon>Coxiella</taxon>
    </lineage>
</organism>
<keyword id="KW-1185">Reference proteome</keyword>
<keyword id="KW-0687">Ribonucleoprotein</keyword>
<keyword id="KW-0689">Ribosomal protein</keyword>
<keyword id="KW-0694">RNA-binding</keyword>
<keyword id="KW-0699">rRNA-binding</keyword>
<dbReference type="EMBL" id="AE016828">
    <property type="protein sequence ID" value="AAO89942.1"/>
    <property type="molecule type" value="Genomic_DNA"/>
</dbReference>
<dbReference type="RefSeq" id="NP_819428.1">
    <property type="nucleotide sequence ID" value="NC_002971.4"/>
</dbReference>
<dbReference type="RefSeq" id="WP_005771970.1">
    <property type="nucleotide sequence ID" value="NZ_CDBG01000001.1"/>
</dbReference>
<dbReference type="SMR" id="Q83ED6"/>
<dbReference type="STRING" id="227377.CBU_0389"/>
<dbReference type="DNASU" id="1208272"/>
<dbReference type="EnsemblBacteria" id="AAO89942">
    <property type="protein sequence ID" value="AAO89942"/>
    <property type="gene ID" value="CBU_0389"/>
</dbReference>
<dbReference type="GeneID" id="1208272"/>
<dbReference type="KEGG" id="cbu:CBU_0389"/>
<dbReference type="PATRIC" id="fig|227377.7.peg.384"/>
<dbReference type="eggNOG" id="COG0268">
    <property type="taxonomic scope" value="Bacteria"/>
</dbReference>
<dbReference type="HOGENOM" id="CLU_160655_4_0_6"/>
<dbReference type="OrthoDB" id="9807974at2"/>
<dbReference type="Proteomes" id="UP000002671">
    <property type="component" value="Chromosome"/>
</dbReference>
<dbReference type="GO" id="GO:0005829">
    <property type="term" value="C:cytosol"/>
    <property type="evidence" value="ECO:0000318"/>
    <property type="project" value="GO_Central"/>
</dbReference>
<dbReference type="GO" id="GO:0015935">
    <property type="term" value="C:small ribosomal subunit"/>
    <property type="evidence" value="ECO:0000318"/>
    <property type="project" value="GO_Central"/>
</dbReference>
<dbReference type="GO" id="GO:0070181">
    <property type="term" value="F:small ribosomal subunit rRNA binding"/>
    <property type="evidence" value="ECO:0000318"/>
    <property type="project" value="GO_Central"/>
</dbReference>
<dbReference type="GO" id="GO:0003735">
    <property type="term" value="F:structural constituent of ribosome"/>
    <property type="evidence" value="ECO:0007669"/>
    <property type="project" value="InterPro"/>
</dbReference>
<dbReference type="GO" id="GO:0006412">
    <property type="term" value="P:translation"/>
    <property type="evidence" value="ECO:0007669"/>
    <property type="project" value="UniProtKB-UniRule"/>
</dbReference>
<dbReference type="FunFam" id="1.20.58.110:FF:000001">
    <property type="entry name" value="30S ribosomal protein S20"/>
    <property type="match status" value="1"/>
</dbReference>
<dbReference type="Gene3D" id="1.20.58.110">
    <property type="entry name" value="Ribosomal protein S20"/>
    <property type="match status" value="1"/>
</dbReference>
<dbReference type="HAMAP" id="MF_00500">
    <property type="entry name" value="Ribosomal_bS20"/>
    <property type="match status" value="1"/>
</dbReference>
<dbReference type="InterPro" id="IPR002583">
    <property type="entry name" value="Ribosomal_bS20"/>
</dbReference>
<dbReference type="InterPro" id="IPR036510">
    <property type="entry name" value="Ribosomal_bS20_sf"/>
</dbReference>
<dbReference type="NCBIfam" id="TIGR00029">
    <property type="entry name" value="S20"/>
    <property type="match status" value="1"/>
</dbReference>
<dbReference type="PANTHER" id="PTHR33398">
    <property type="entry name" value="30S RIBOSOMAL PROTEIN S20"/>
    <property type="match status" value="1"/>
</dbReference>
<dbReference type="PANTHER" id="PTHR33398:SF1">
    <property type="entry name" value="SMALL RIBOSOMAL SUBUNIT PROTEIN BS20C"/>
    <property type="match status" value="1"/>
</dbReference>
<dbReference type="Pfam" id="PF01649">
    <property type="entry name" value="Ribosomal_S20p"/>
    <property type="match status" value="1"/>
</dbReference>
<dbReference type="SUPFAM" id="SSF46992">
    <property type="entry name" value="Ribosomal protein S20"/>
    <property type="match status" value="1"/>
</dbReference>